<keyword id="KW-0227">DNA damage</keyword>
<keyword id="KW-0234">DNA repair</keyword>
<keyword id="KW-0238">DNA-binding</keyword>
<keyword id="KW-0326">Glycosidase</keyword>
<keyword id="KW-0378">Hydrolase</keyword>
<keyword id="KW-0456">Lyase</keyword>
<keyword id="KW-0479">Metal-binding</keyword>
<keyword id="KW-0511">Multifunctional enzyme</keyword>
<keyword id="KW-0862">Zinc</keyword>
<keyword id="KW-0863">Zinc-finger</keyword>
<reference key="1">
    <citation type="submission" date="2007-05" db="EMBL/GenBank/DDBJ databases">
        <title>Complete sequence of Pseudomonas putida F1.</title>
        <authorList>
            <consortium name="US DOE Joint Genome Institute"/>
            <person name="Copeland A."/>
            <person name="Lucas S."/>
            <person name="Lapidus A."/>
            <person name="Barry K."/>
            <person name="Detter J.C."/>
            <person name="Glavina del Rio T."/>
            <person name="Hammon N."/>
            <person name="Israni S."/>
            <person name="Dalin E."/>
            <person name="Tice H."/>
            <person name="Pitluck S."/>
            <person name="Chain P."/>
            <person name="Malfatti S."/>
            <person name="Shin M."/>
            <person name="Vergez L."/>
            <person name="Schmutz J."/>
            <person name="Larimer F."/>
            <person name="Land M."/>
            <person name="Hauser L."/>
            <person name="Kyrpides N."/>
            <person name="Lykidis A."/>
            <person name="Parales R."/>
            <person name="Richardson P."/>
        </authorList>
    </citation>
    <scope>NUCLEOTIDE SEQUENCE [LARGE SCALE GENOMIC DNA]</scope>
    <source>
        <strain>ATCC 700007 / DSM 6899 / JCM 31910 / BCRC 17059 / LMG 24140 / F1</strain>
    </source>
</reference>
<feature type="initiator methionine" description="Removed" evidence="1">
    <location>
        <position position="1"/>
    </location>
</feature>
<feature type="chain" id="PRO_1000008745" description="Formamidopyrimidine-DNA glycosylase">
    <location>
        <begin position="2"/>
        <end position="270"/>
    </location>
</feature>
<feature type="zinc finger region" description="FPG-type" evidence="2">
    <location>
        <begin position="236"/>
        <end position="270"/>
    </location>
</feature>
<feature type="active site" description="Schiff-base intermediate with DNA" evidence="2">
    <location>
        <position position="2"/>
    </location>
</feature>
<feature type="active site" description="Proton donor" evidence="2">
    <location>
        <position position="3"/>
    </location>
</feature>
<feature type="active site" description="Proton donor; for beta-elimination activity" evidence="2">
    <location>
        <position position="58"/>
    </location>
</feature>
<feature type="active site" description="Proton donor; for delta-elimination activity" evidence="2">
    <location>
        <position position="260"/>
    </location>
</feature>
<feature type="binding site" evidence="2">
    <location>
        <position position="91"/>
    </location>
    <ligand>
        <name>DNA</name>
        <dbReference type="ChEBI" id="CHEBI:16991"/>
    </ligand>
</feature>
<feature type="binding site" evidence="2">
    <location>
        <position position="110"/>
    </location>
    <ligand>
        <name>DNA</name>
        <dbReference type="ChEBI" id="CHEBI:16991"/>
    </ligand>
</feature>
<feature type="binding site" evidence="2">
    <location>
        <position position="151"/>
    </location>
    <ligand>
        <name>DNA</name>
        <dbReference type="ChEBI" id="CHEBI:16991"/>
    </ligand>
</feature>
<protein>
    <recommendedName>
        <fullName evidence="2">Formamidopyrimidine-DNA glycosylase</fullName>
        <shortName evidence="2">Fapy-DNA glycosylase</shortName>
        <ecNumber evidence="2">3.2.2.23</ecNumber>
    </recommendedName>
    <alternativeName>
        <fullName evidence="2">DNA-(apurinic or apyrimidinic site) lyase MutM</fullName>
        <shortName evidence="2">AP lyase MutM</shortName>
        <ecNumber evidence="2">4.2.99.18</ecNumber>
    </alternativeName>
</protein>
<dbReference type="EC" id="3.2.2.23" evidence="2"/>
<dbReference type="EC" id="4.2.99.18" evidence="2"/>
<dbReference type="EMBL" id="CP000712">
    <property type="protein sequence ID" value="ABQ81119.1"/>
    <property type="molecule type" value="Genomic_DNA"/>
</dbReference>
<dbReference type="SMR" id="A5WAF9"/>
<dbReference type="KEGG" id="ppf:Pput_4999"/>
<dbReference type="eggNOG" id="COG0266">
    <property type="taxonomic scope" value="Bacteria"/>
</dbReference>
<dbReference type="HOGENOM" id="CLU_038423_1_1_6"/>
<dbReference type="GO" id="GO:0034039">
    <property type="term" value="F:8-oxo-7,8-dihydroguanine DNA N-glycosylase activity"/>
    <property type="evidence" value="ECO:0007669"/>
    <property type="project" value="TreeGrafter"/>
</dbReference>
<dbReference type="GO" id="GO:0140078">
    <property type="term" value="F:class I DNA-(apurinic or apyrimidinic site) endonuclease activity"/>
    <property type="evidence" value="ECO:0007669"/>
    <property type="project" value="UniProtKB-EC"/>
</dbReference>
<dbReference type="GO" id="GO:0003684">
    <property type="term" value="F:damaged DNA binding"/>
    <property type="evidence" value="ECO:0007669"/>
    <property type="project" value="InterPro"/>
</dbReference>
<dbReference type="GO" id="GO:0008270">
    <property type="term" value="F:zinc ion binding"/>
    <property type="evidence" value="ECO:0007669"/>
    <property type="project" value="UniProtKB-UniRule"/>
</dbReference>
<dbReference type="GO" id="GO:0006284">
    <property type="term" value="P:base-excision repair"/>
    <property type="evidence" value="ECO:0007669"/>
    <property type="project" value="InterPro"/>
</dbReference>
<dbReference type="CDD" id="cd08966">
    <property type="entry name" value="EcFpg-like_N"/>
    <property type="match status" value="1"/>
</dbReference>
<dbReference type="FunFam" id="1.10.8.50:FF:000003">
    <property type="entry name" value="Formamidopyrimidine-DNA glycosylase"/>
    <property type="match status" value="1"/>
</dbReference>
<dbReference type="FunFam" id="3.20.190.10:FF:000001">
    <property type="entry name" value="Formamidopyrimidine-DNA glycosylase"/>
    <property type="match status" value="1"/>
</dbReference>
<dbReference type="Gene3D" id="1.10.8.50">
    <property type="match status" value="1"/>
</dbReference>
<dbReference type="Gene3D" id="3.20.190.10">
    <property type="entry name" value="MutM-like, N-terminal"/>
    <property type="match status" value="1"/>
</dbReference>
<dbReference type="HAMAP" id="MF_00103">
    <property type="entry name" value="Fapy_DNA_glycosyl"/>
    <property type="match status" value="1"/>
</dbReference>
<dbReference type="InterPro" id="IPR015886">
    <property type="entry name" value="DNA_glyclase/AP_lyase_DNA-bd"/>
</dbReference>
<dbReference type="InterPro" id="IPR015887">
    <property type="entry name" value="DNA_glyclase_Znf_dom_DNA_BS"/>
</dbReference>
<dbReference type="InterPro" id="IPR020629">
    <property type="entry name" value="Formamido-pyr_DNA_Glyclase"/>
</dbReference>
<dbReference type="InterPro" id="IPR012319">
    <property type="entry name" value="FPG_cat"/>
</dbReference>
<dbReference type="InterPro" id="IPR035937">
    <property type="entry name" value="MutM-like_N-ter"/>
</dbReference>
<dbReference type="InterPro" id="IPR010979">
    <property type="entry name" value="Ribosomal_uS13-like_H2TH"/>
</dbReference>
<dbReference type="InterPro" id="IPR000214">
    <property type="entry name" value="Znf_DNA_glyclase/AP_lyase"/>
</dbReference>
<dbReference type="InterPro" id="IPR010663">
    <property type="entry name" value="Znf_FPG/IleRS"/>
</dbReference>
<dbReference type="NCBIfam" id="TIGR00577">
    <property type="entry name" value="fpg"/>
    <property type="match status" value="1"/>
</dbReference>
<dbReference type="NCBIfam" id="NF002211">
    <property type="entry name" value="PRK01103.1"/>
    <property type="match status" value="1"/>
</dbReference>
<dbReference type="PANTHER" id="PTHR22993">
    <property type="entry name" value="FORMAMIDOPYRIMIDINE-DNA GLYCOSYLASE"/>
    <property type="match status" value="1"/>
</dbReference>
<dbReference type="PANTHER" id="PTHR22993:SF9">
    <property type="entry name" value="FORMAMIDOPYRIMIDINE-DNA GLYCOSYLASE"/>
    <property type="match status" value="1"/>
</dbReference>
<dbReference type="Pfam" id="PF01149">
    <property type="entry name" value="Fapy_DNA_glyco"/>
    <property type="match status" value="1"/>
</dbReference>
<dbReference type="Pfam" id="PF06831">
    <property type="entry name" value="H2TH"/>
    <property type="match status" value="1"/>
</dbReference>
<dbReference type="Pfam" id="PF06827">
    <property type="entry name" value="zf-FPG_IleRS"/>
    <property type="match status" value="1"/>
</dbReference>
<dbReference type="SMART" id="SM00898">
    <property type="entry name" value="Fapy_DNA_glyco"/>
    <property type="match status" value="1"/>
</dbReference>
<dbReference type="SMART" id="SM01232">
    <property type="entry name" value="H2TH"/>
    <property type="match status" value="1"/>
</dbReference>
<dbReference type="SUPFAM" id="SSF57716">
    <property type="entry name" value="Glucocorticoid receptor-like (DNA-binding domain)"/>
    <property type="match status" value="1"/>
</dbReference>
<dbReference type="SUPFAM" id="SSF81624">
    <property type="entry name" value="N-terminal domain of MutM-like DNA repair proteins"/>
    <property type="match status" value="1"/>
</dbReference>
<dbReference type="SUPFAM" id="SSF46946">
    <property type="entry name" value="S13-like H2TH domain"/>
    <property type="match status" value="1"/>
</dbReference>
<dbReference type="PROSITE" id="PS51068">
    <property type="entry name" value="FPG_CAT"/>
    <property type="match status" value="1"/>
</dbReference>
<dbReference type="PROSITE" id="PS01242">
    <property type="entry name" value="ZF_FPG_1"/>
    <property type="match status" value="1"/>
</dbReference>
<dbReference type="PROSITE" id="PS51066">
    <property type="entry name" value="ZF_FPG_2"/>
    <property type="match status" value="1"/>
</dbReference>
<proteinExistence type="inferred from homology"/>
<accession>A5WAF9</accession>
<evidence type="ECO:0000250" key="1"/>
<evidence type="ECO:0000255" key="2">
    <source>
        <dbReference type="HAMAP-Rule" id="MF_00103"/>
    </source>
</evidence>
<gene>
    <name evidence="2" type="primary">mutM</name>
    <name evidence="2" type="synonym">fpg</name>
    <name type="ordered locus">Pput_4999</name>
</gene>
<name>FPG_PSEP1</name>
<organism>
    <name type="scientific">Pseudomonas putida (strain ATCC 700007 / DSM 6899 / JCM 31910 / BCRC 17059 / LMG 24140 / F1)</name>
    <dbReference type="NCBI Taxonomy" id="351746"/>
    <lineage>
        <taxon>Bacteria</taxon>
        <taxon>Pseudomonadati</taxon>
        <taxon>Pseudomonadota</taxon>
        <taxon>Gammaproteobacteria</taxon>
        <taxon>Pseudomonadales</taxon>
        <taxon>Pseudomonadaceae</taxon>
        <taxon>Pseudomonas</taxon>
    </lineage>
</organism>
<comment type="function">
    <text evidence="2">Involved in base excision repair of DNA damaged by oxidation or by mutagenic agents. Acts as a DNA glycosylase that recognizes and removes damaged bases. Has a preference for oxidized purines, such as 7,8-dihydro-8-oxoguanine (8-oxoG). Has AP (apurinic/apyrimidinic) lyase activity and introduces nicks in the DNA strand. Cleaves the DNA backbone by beta-delta elimination to generate a single-strand break at the site of the removed base with both 3'- and 5'-phosphates.</text>
</comment>
<comment type="catalytic activity">
    <reaction evidence="2">
        <text>Hydrolysis of DNA containing ring-opened 7-methylguanine residues, releasing 2,6-diamino-4-hydroxy-5-(N-methyl)formamidopyrimidine.</text>
        <dbReference type="EC" id="3.2.2.23"/>
    </reaction>
</comment>
<comment type="catalytic activity">
    <reaction evidence="2">
        <text>2'-deoxyribonucleotide-(2'-deoxyribose 5'-phosphate)-2'-deoxyribonucleotide-DNA = a 3'-end 2'-deoxyribonucleotide-(2,3-dehydro-2,3-deoxyribose 5'-phosphate)-DNA + a 5'-end 5'-phospho-2'-deoxyribonucleoside-DNA + H(+)</text>
        <dbReference type="Rhea" id="RHEA:66592"/>
        <dbReference type="Rhea" id="RHEA-COMP:13180"/>
        <dbReference type="Rhea" id="RHEA-COMP:16897"/>
        <dbReference type="Rhea" id="RHEA-COMP:17067"/>
        <dbReference type="ChEBI" id="CHEBI:15378"/>
        <dbReference type="ChEBI" id="CHEBI:136412"/>
        <dbReference type="ChEBI" id="CHEBI:157695"/>
        <dbReference type="ChEBI" id="CHEBI:167181"/>
        <dbReference type="EC" id="4.2.99.18"/>
    </reaction>
</comment>
<comment type="cofactor">
    <cofactor evidence="2">
        <name>Zn(2+)</name>
        <dbReference type="ChEBI" id="CHEBI:29105"/>
    </cofactor>
    <text evidence="2">Binds 1 zinc ion per subunit.</text>
</comment>
<comment type="subunit">
    <text evidence="2">Monomer.</text>
</comment>
<comment type="similarity">
    <text evidence="2">Belongs to the FPG family.</text>
</comment>
<sequence>MPELPEVETTRRGIAPHLEGQRVSRVVVRDRRLRWPIPEDLDVRLSGQRIVSVERRAKYLLINAEVGTLISHLGMSGNLRLVELGLPAAKHEHVDIELESGLMLRYTDPRRFGAMLWSLDPLNHELLLRLGPEPLTDLFDGERLFQLSRGRSMAVKPFIMDNAVVVGVGNIYATEALFAAGIDPRREAGGISRARYLKLAIEIKRVLAAAIEQGGTTLRDFIGGDGQPGYFQQELFVYGRGGQPCKVCGTELREVKLGQRASVYCPRCQR</sequence>